<gene>
    <name evidence="1" type="primary">rpsT</name>
    <name type="ordered locus">RD1_0207</name>
</gene>
<comment type="function">
    <text evidence="1">Binds directly to 16S ribosomal RNA.</text>
</comment>
<comment type="similarity">
    <text evidence="1">Belongs to the bacterial ribosomal protein bS20 family.</text>
</comment>
<protein>
    <recommendedName>
        <fullName evidence="1">Small ribosomal subunit protein bS20</fullName>
    </recommendedName>
    <alternativeName>
        <fullName evidence="2">30S ribosomal protein S20</fullName>
    </alternativeName>
</protein>
<accession>Q16DK7</accession>
<sequence>MANSPQAKKRARQNEARFQINKARRSRIRTFLRRVEEAIASGDKEAATAALRAAQPELMRGVTKGVFHKNTAARKMSRLAARVKVLG</sequence>
<keyword id="KW-1185">Reference proteome</keyword>
<keyword id="KW-0687">Ribonucleoprotein</keyword>
<keyword id="KW-0689">Ribosomal protein</keyword>
<keyword id="KW-0694">RNA-binding</keyword>
<keyword id="KW-0699">rRNA-binding</keyword>
<feature type="chain" id="PRO_0000260140" description="Small ribosomal subunit protein bS20">
    <location>
        <begin position="1"/>
        <end position="87"/>
    </location>
</feature>
<organism>
    <name type="scientific">Roseobacter denitrificans (strain ATCC 33942 / OCh 114)</name>
    <name type="common">Erythrobacter sp. (strain OCh 114)</name>
    <name type="synonym">Roseobacter denitrificans</name>
    <dbReference type="NCBI Taxonomy" id="375451"/>
    <lineage>
        <taxon>Bacteria</taxon>
        <taxon>Pseudomonadati</taxon>
        <taxon>Pseudomonadota</taxon>
        <taxon>Alphaproteobacteria</taxon>
        <taxon>Rhodobacterales</taxon>
        <taxon>Roseobacteraceae</taxon>
        <taxon>Roseobacter</taxon>
    </lineage>
</organism>
<dbReference type="EMBL" id="CP000362">
    <property type="protein sequence ID" value="ABG29936.1"/>
    <property type="molecule type" value="Genomic_DNA"/>
</dbReference>
<dbReference type="RefSeq" id="WP_011566558.1">
    <property type="nucleotide sequence ID" value="NC_008209.1"/>
</dbReference>
<dbReference type="SMR" id="Q16DK7"/>
<dbReference type="STRING" id="375451.RD1_0207"/>
<dbReference type="KEGG" id="rde:RD1_0207"/>
<dbReference type="eggNOG" id="COG0268">
    <property type="taxonomic scope" value="Bacteria"/>
</dbReference>
<dbReference type="HOGENOM" id="CLU_160655_3_0_5"/>
<dbReference type="OrthoDB" id="9807974at2"/>
<dbReference type="Proteomes" id="UP000007029">
    <property type="component" value="Chromosome"/>
</dbReference>
<dbReference type="GO" id="GO:0015935">
    <property type="term" value="C:small ribosomal subunit"/>
    <property type="evidence" value="ECO:0007669"/>
    <property type="project" value="TreeGrafter"/>
</dbReference>
<dbReference type="GO" id="GO:0070181">
    <property type="term" value="F:small ribosomal subunit rRNA binding"/>
    <property type="evidence" value="ECO:0007669"/>
    <property type="project" value="TreeGrafter"/>
</dbReference>
<dbReference type="GO" id="GO:0003735">
    <property type="term" value="F:structural constituent of ribosome"/>
    <property type="evidence" value="ECO:0007669"/>
    <property type="project" value="InterPro"/>
</dbReference>
<dbReference type="GO" id="GO:0006412">
    <property type="term" value="P:translation"/>
    <property type="evidence" value="ECO:0007669"/>
    <property type="project" value="UniProtKB-UniRule"/>
</dbReference>
<dbReference type="FunFam" id="1.20.58.110:FF:000001">
    <property type="entry name" value="30S ribosomal protein S20"/>
    <property type="match status" value="1"/>
</dbReference>
<dbReference type="Gene3D" id="1.20.58.110">
    <property type="entry name" value="Ribosomal protein S20"/>
    <property type="match status" value="1"/>
</dbReference>
<dbReference type="HAMAP" id="MF_00500">
    <property type="entry name" value="Ribosomal_bS20"/>
    <property type="match status" value="1"/>
</dbReference>
<dbReference type="InterPro" id="IPR002583">
    <property type="entry name" value="Ribosomal_bS20"/>
</dbReference>
<dbReference type="InterPro" id="IPR036510">
    <property type="entry name" value="Ribosomal_bS20_sf"/>
</dbReference>
<dbReference type="NCBIfam" id="TIGR00029">
    <property type="entry name" value="S20"/>
    <property type="match status" value="1"/>
</dbReference>
<dbReference type="PANTHER" id="PTHR33398">
    <property type="entry name" value="30S RIBOSOMAL PROTEIN S20"/>
    <property type="match status" value="1"/>
</dbReference>
<dbReference type="PANTHER" id="PTHR33398:SF1">
    <property type="entry name" value="SMALL RIBOSOMAL SUBUNIT PROTEIN BS20C"/>
    <property type="match status" value="1"/>
</dbReference>
<dbReference type="Pfam" id="PF01649">
    <property type="entry name" value="Ribosomal_S20p"/>
    <property type="match status" value="1"/>
</dbReference>
<dbReference type="SUPFAM" id="SSF46992">
    <property type="entry name" value="Ribosomal protein S20"/>
    <property type="match status" value="1"/>
</dbReference>
<evidence type="ECO:0000255" key="1">
    <source>
        <dbReference type="HAMAP-Rule" id="MF_00500"/>
    </source>
</evidence>
<evidence type="ECO:0000305" key="2"/>
<proteinExistence type="inferred from homology"/>
<name>RS20_ROSDO</name>
<reference key="1">
    <citation type="journal article" date="2007" name="J. Bacteriol.">
        <title>The complete genome sequence of Roseobacter denitrificans reveals a mixotrophic rather than photosynthetic metabolism.</title>
        <authorList>
            <person name="Swingley W.D."/>
            <person name="Sadekar S."/>
            <person name="Mastrian S.D."/>
            <person name="Matthies H.J."/>
            <person name="Hao J."/>
            <person name="Ramos H."/>
            <person name="Acharya C.R."/>
            <person name="Conrad A.L."/>
            <person name="Taylor H.L."/>
            <person name="Dejesa L.C."/>
            <person name="Shah M.K."/>
            <person name="O'Huallachain M.E."/>
            <person name="Lince M.T."/>
            <person name="Blankenship R.E."/>
            <person name="Beatty J.T."/>
            <person name="Touchman J.W."/>
        </authorList>
    </citation>
    <scope>NUCLEOTIDE SEQUENCE [LARGE SCALE GENOMIC DNA]</scope>
    <source>
        <strain>ATCC 33942 / OCh 114</strain>
    </source>
</reference>